<accession>B9DW65</accession>
<keyword id="KW-0067">ATP-binding</keyword>
<keyword id="KW-0963">Cytoplasm</keyword>
<keyword id="KW-0227">DNA damage</keyword>
<keyword id="KW-0233">DNA recombination</keyword>
<keyword id="KW-0234">DNA repair</keyword>
<keyword id="KW-0238">DNA-binding</keyword>
<keyword id="KW-0547">Nucleotide-binding</keyword>
<keyword id="KW-1185">Reference proteome</keyword>
<keyword id="KW-0742">SOS response</keyword>
<protein>
    <recommendedName>
        <fullName evidence="1">Protein RecA</fullName>
    </recommendedName>
    <alternativeName>
        <fullName evidence="1">Recombinase A</fullName>
    </alternativeName>
</protein>
<sequence length="379" mass="40830">MAKKVKKTDDISKKFGEDRRKALDDALKNIEKDFGKGAVMRLGERAEQKVQVMSSGSLALDIALGAGGYPKGRIIEIYGPESSGKTTVALHAVAQAQKEGGIAAFIDAEHALDPAYAAALGVNIDELLLSQPDSGEQGLEIAGKLIDSGAVDLVVIDSVAALVPRAEIDGDIGDSHVGLQARMMSQAMRKLSASINKTKTIAIFINQLREKVGVMFGNPETTPGGRALKFYASVRLDVRGNTQIKGTGDQKDSSIGKETKIKVVKNKVAPPFKVAEVEIMYGEGISRTGELIKIASDLDVIQKAGAWFSYNGEKIGQGSENAKKFLADHPEIFDEIDHKVRVKVGLLEDEVLDNNQETVELPETDEFILDLDDAIEIED</sequence>
<evidence type="ECO:0000255" key="1">
    <source>
        <dbReference type="HAMAP-Rule" id="MF_00268"/>
    </source>
</evidence>
<dbReference type="EMBL" id="AM946015">
    <property type="protein sequence ID" value="CAR43767.1"/>
    <property type="molecule type" value="Genomic_DNA"/>
</dbReference>
<dbReference type="RefSeq" id="WP_015912068.1">
    <property type="nucleotide sequence ID" value="NC_012004.1"/>
</dbReference>
<dbReference type="SMR" id="B9DW65"/>
<dbReference type="STRING" id="218495.SUB1778"/>
<dbReference type="GeneID" id="93827096"/>
<dbReference type="KEGG" id="sub:SUB1778"/>
<dbReference type="eggNOG" id="COG0468">
    <property type="taxonomic scope" value="Bacteria"/>
</dbReference>
<dbReference type="HOGENOM" id="CLU_040469_3_2_9"/>
<dbReference type="OrthoDB" id="9776733at2"/>
<dbReference type="Proteomes" id="UP000000449">
    <property type="component" value="Chromosome"/>
</dbReference>
<dbReference type="GO" id="GO:0005829">
    <property type="term" value="C:cytosol"/>
    <property type="evidence" value="ECO:0007669"/>
    <property type="project" value="TreeGrafter"/>
</dbReference>
<dbReference type="GO" id="GO:0005524">
    <property type="term" value="F:ATP binding"/>
    <property type="evidence" value="ECO:0007669"/>
    <property type="project" value="UniProtKB-UniRule"/>
</dbReference>
<dbReference type="GO" id="GO:0016887">
    <property type="term" value="F:ATP hydrolysis activity"/>
    <property type="evidence" value="ECO:0007669"/>
    <property type="project" value="InterPro"/>
</dbReference>
<dbReference type="GO" id="GO:0140664">
    <property type="term" value="F:ATP-dependent DNA damage sensor activity"/>
    <property type="evidence" value="ECO:0007669"/>
    <property type="project" value="InterPro"/>
</dbReference>
<dbReference type="GO" id="GO:0003684">
    <property type="term" value="F:damaged DNA binding"/>
    <property type="evidence" value="ECO:0007669"/>
    <property type="project" value="UniProtKB-UniRule"/>
</dbReference>
<dbReference type="GO" id="GO:0003697">
    <property type="term" value="F:single-stranded DNA binding"/>
    <property type="evidence" value="ECO:0007669"/>
    <property type="project" value="UniProtKB-UniRule"/>
</dbReference>
<dbReference type="GO" id="GO:0006310">
    <property type="term" value="P:DNA recombination"/>
    <property type="evidence" value="ECO:0007669"/>
    <property type="project" value="UniProtKB-UniRule"/>
</dbReference>
<dbReference type="GO" id="GO:0006281">
    <property type="term" value="P:DNA repair"/>
    <property type="evidence" value="ECO:0007669"/>
    <property type="project" value="UniProtKB-UniRule"/>
</dbReference>
<dbReference type="GO" id="GO:0009432">
    <property type="term" value="P:SOS response"/>
    <property type="evidence" value="ECO:0007669"/>
    <property type="project" value="UniProtKB-UniRule"/>
</dbReference>
<dbReference type="CDD" id="cd00983">
    <property type="entry name" value="RecA"/>
    <property type="match status" value="1"/>
</dbReference>
<dbReference type="FunFam" id="3.40.50.300:FF:000087">
    <property type="entry name" value="Recombinase RecA"/>
    <property type="match status" value="1"/>
</dbReference>
<dbReference type="Gene3D" id="3.40.50.300">
    <property type="entry name" value="P-loop containing nucleotide triphosphate hydrolases"/>
    <property type="match status" value="1"/>
</dbReference>
<dbReference type="HAMAP" id="MF_00268">
    <property type="entry name" value="RecA"/>
    <property type="match status" value="1"/>
</dbReference>
<dbReference type="InterPro" id="IPR003593">
    <property type="entry name" value="AAA+_ATPase"/>
</dbReference>
<dbReference type="InterPro" id="IPR013765">
    <property type="entry name" value="DNA_recomb/repair_RecA"/>
</dbReference>
<dbReference type="InterPro" id="IPR020584">
    <property type="entry name" value="DNA_recomb/repair_RecA_CS"/>
</dbReference>
<dbReference type="InterPro" id="IPR027417">
    <property type="entry name" value="P-loop_NTPase"/>
</dbReference>
<dbReference type="InterPro" id="IPR049261">
    <property type="entry name" value="RecA-like_C"/>
</dbReference>
<dbReference type="InterPro" id="IPR049428">
    <property type="entry name" value="RecA-like_N"/>
</dbReference>
<dbReference type="InterPro" id="IPR020588">
    <property type="entry name" value="RecA_ATP-bd"/>
</dbReference>
<dbReference type="InterPro" id="IPR023400">
    <property type="entry name" value="RecA_C_sf"/>
</dbReference>
<dbReference type="InterPro" id="IPR020587">
    <property type="entry name" value="RecA_monomer-monomer_interface"/>
</dbReference>
<dbReference type="NCBIfam" id="TIGR02012">
    <property type="entry name" value="tigrfam_recA"/>
    <property type="match status" value="1"/>
</dbReference>
<dbReference type="PANTHER" id="PTHR45900:SF1">
    <property type="entry name" value="MITOCHONDRIAL DNA REPAIR PROTEIN RECA HOMOLOG-RELATED"/>
    <property type="match status" value="1"/>
</dbReference>
<dbReference type="PANTHER" id="PTHR45900">
    <property type="entry name" value="RECA"/>
    <property type="match status" value="1"/>
</dbReference>
<dbReference type="Pfam" id="PF00154">
    <property type="entry name" value="RecA"/>
    <property type="match status" value="1"/>
</dbReference>
<dbReference type="Pfam" id="PF21096">
    <property type="entry name" value="RecA_C"/>
    <property type="match status" value="1"/>
</dbReference>
<dbReference type="PRINTS" id="PR00142">
    <property type="entry name" value="RECA"/>
</dbReference>
<dbReference type="SMART" id="SM00382">
    <property type="entry name" value="AAA"/>
    <property type="match status" value="1"/>
</dbReference>
<dbReference type="SUPFAM" id="SSF52540">
    <property type="entry name" value="P-loop containing nucleoside triphosphate hydrolases"/>
    <property type="match status" value="1"/>
</dbReference>
<dbReference type="SUPFAM" id="SSF54752">
    <property type="entry name" value="RecA protein, C-terminal domain"/>
    <property type="match status" value="1"/>
</dbReference>
<dbReference type="PROSITE" id="PS00321">
    <property type="entry name" value="RECA_1"/>
    <property type="match status" value="1"/>
</dbReference>
<dbReference type="PROSITE" id="PS50162">
    <property type="entry name" value="RECA_2"/>
    <property type="match status" value="1"/>
</dbReference>
<dbReference type="PROSITE" id="PS50163">
    <property type="entry name" value="RECA_3"/>
    <property type="match status" value="1"/>
</dbReference>
<feature type="chain" id="PRO_1000193335" description="Protein RecA">
    <location>
        <begin position="1"/>
        <end position="379"/>
    </location>
</feature>
<feature type="binding site" evidence="1">
    <location>
        <begin position="79"/>
        <end position="86"/>
    </location>
    <ligand>
        <name>ATP</name>
        <dbReference type="ChEBI" id="CHEBI:30616"/>
    </ligand>
</feature>
<proteinExistence type="inferred from homology"/>
<comment type="function">
    <text evidence="1">Can catalyze the hydrolysis of ATP in the presence of single-stranded DNA, the ATP-dependent uptake of single-stranded DNA by duplex DNA, and the ATP-dependent hybridization of homologous single-stranded DNAs. It interacts with LexA causing its activation and leading to its autocatalytic cleavage.</text>
</comment>
<comment type="subcellular location">
    <subcellularLocation>
        <location evidence="1">Cytoplasm</location>
    </subcellularLocation>
</comment>
<comment type="similarity">
    <text evidence="1">Belongs to the RecA family.</text>
</comment>
<reference key="1">
    <citation type="journal article" date="2009" name="BMC Genomics">
        <title>Evidence for niche adaptation in the genome of the bovine pathogen Streptococcus uberis.</title>
        <authorList>
            <person name="Ward P.N."/>
            <person name="Holden M.T.G."/>
            <person name="Leigh J.A."/>
            <person name="Lennard N."/>
            <person name="Bignell A."/>
            <person name="Barron A."/>
            <person name="Clark L."/>
            <person name="Quail M.A."/>
            <person name="Woodward J."/>
            <person name="Barrell B.G."/>
            <person name="Egan S.A."/>
            <person name="Field T.R."/>
            <person name="Maskell D."/>
            <person name="Kehoe M."/>
            <person name="Dowson C.G."/>
            <person name="Chanter N."/>
            <person name="Whatmore A.M."/>
            <person name="Bentley S.D."/>
            <person name="Parkhill J."/>
        </authorList>
    </citation>
    <scope>NUCLEOTIDE SEQUENCE [LARGE SCALE GENOMIC DNA]</scope>
    <source>
        <strain>ATCC BAA-854 / 0140J</strain>
    </source>
</reference>
<name>RECA_STRU0</name>
<gene>
    <name evidence="1" type="primary">recA</name>
    <name type="ordered locus">SUB1778</name>
</gene>
<organism>
    <name type="scientific">Streptococcus uberis (strain ATCC BAA-854 / 0140J)</name>
    <dbReference type="NCBI Taxonomy" id="218495"/>
    <lineage>
        <taxon>Bacteria</taxon>
        <taxon>Bacillati</taxon>
        <taxon>Bacillota</taxon>
        <taxon>Bacilli</taxon>
        <taxon>Lactobacillales</taxon>
        <taxon>Streptococcaceae</taxon>
        <taxon>Streptococcus</taxon>
    </lineage>
</organism>